<dbReference type="EMBL" id="U66870">
    <property type="protein sequence ID" value="AAC53105.1"/>
    <property type="molecule type" value="mRNA"/>
</dbReference>
<dbReference type="EMBL" id="D73368">
    <property type="protein sequence ID" value="BAA11118.1"/>
    <property type="molecule type" value="mRNA"/>
</dbReference>
<dbReference type="EMBL" id="AK010451">
    <property type="protein sequence ID" value="BAB26950.1"/>
    <property type="molecule type" value="mRNA"/>
</dbReference>
<dbReference type="EMBL" id="AK080617">
    <property type="protein sequence ID" value="BAC37960.1"/>
    <property type="molecule type" value="mRNA"/>
</dbReference>
<dbReference type="EMBL" id="BC083141">
    <property type="protein sequence ID" value="AAH83141.1"/>
    <property type="molecule type" value="mRNA"/>
</dbReference>
<dbReference type="CCDS" id="CCDS36483.1"/>
<dbReference type="RefSeq" id="NP_031977.1">
    <property type="nucleotide sequence ID" value="NM_007951.5"/>
</dbReference>
<dbReference type="PDB" id="1WWQ">
    <property type="method" value="NMR"/>
    <property type="chains" value="A=1-104"/>
</dbReference>
<dbReference type="PDB" id="1WZ7">
    <property type="method" value="X-ray"/>
    <property type="resolution" value="2.10 A"/>
    <property type="chains" value="A/B/C=1-104"/>
</dbReference>
<dbReference type="PDBsum" id="1WWQ"/>
<dbReference type="PDBsum" id="1WZ7"/>
<dbReference type="SMR" id="P84089"/>
<dbReference type="BioGRID" id="199505">
    <property type="interactions" value="45"/>
</dbReference>
<dbReference type="FunCoup" id="P84089">
    <property type="interactions" value="3329"/>
</dbReference>
<dbReference type="IntAct" id="P84089">
    <property type="interactions" value="33"/>
</dbReference>
<dbReference type="MINT" id="P84089"/>
<dbReference type="STRING" id="10090.ENSMUSP00000129620"/>
<dbReference type="GlyGen" id="P84089">
    <property type="glycosylation" value="1 site, 1 O-linked glycan (1 site)"/>
</dbReference>
<dbReference type="iPTMnet" id="P84089"/>
<dbReference type="PhosphoSitePlus" id="P84089"/>
<dbReference type="SwissPalm" id="P84089"/>
<dbReference type="jPOST" id="P84089"/>
<dbReference type="PaxDb" id="10090-ENSMUSP00000021559"/>
<dbReference type="PeptideAtlas" id="P84089"/>
<dbReference type="ProteomicsDB" id="275884"/>
<dbReference type="Pumba" id="P84089"/>
<dbReference type="TopDownProteomics" id="P84089"/>
<dbReference type="DNASU" id="13877"/>
<dbReference type="Ensembl" id="ENSMUST00000021559.14">
    <property type="protein sequence ID" value="ENSMUSP00000021559.8"/>
    <property type="gene ID" value="ENSMUSG00000021131.15"/>
</dbReference>
<dbReference type="Ensembl" id="ENSMUST00000080152.5">
    <property type="protein sequence ID" value="ENSMUSP00000147411.2"/>
    <property type="gene ID" value="ENSMUSG00000063412.5"/>
</dbReference>
<dbReference type="GeneID" id="13877"/>
<dbReference type="KEGG" id="mmu:13877"/>
<dbReference type="UCSC" id="uc007oaz.2">
    <property type="organism name" value="mouse"/>
</dbReference>
<dbReference type="AGR" id="MGI:108089"/>
<dbReference type="CTD" id="2079"/>
<dbReference type="MGI" id="MGI:108089">
    <property type="gene designation" value="Erh"/>
</dbReference>
<dbReference type="VEuPathDB" id="HostDB:ENSMUSG00000021131"/>
<dbReference type="VEuPathDB" id="HostDB:ENSMUSG00000063412"/>
<dbReference type="eggNOG" id="KOG1766">
    <property type="taxonomic scope" value="Eukaryota"/>
</dbReference>
<dbReference type="GeneTree" id="ENSGT00390000003316"/>
<dbReference type="HOGENOM" id="CLU_125703_1_0_1"/>
<dbReference type="InParanoid" id="P84089"/>
<dbReference type="OMA" id="ESRTWSD"/>
<dbReference type="OrthoDB" id="7887808at2759"/>
<dbReference type="PhylomeDB" id="P84089"/>
<dbReference type="TreeFam" id="TF314568"/>
<dbReference type="BioGRID-ORCS" id="13877">
    <property type="hits" value="27 hits in 76 CRISPR screens"/>
</dbReference>
<dbReference type="CD-CODE" id="5E82D60E">
    <property type="entry name" value="Nucleolus"/>
</dbReference>
<dbReference type="ChiTaRS" id="Erh">
    <property type="organism name" value="mouse"/>
</dbReference>
<dbReference type="EvolutionaryTrace" id="P84089"/>
<dbReference type="PRO" id="PR:P84089"/>
<dbReference type="Proteomes" id="UP000000589">
    <property type="component" value="Chromosome 12"/>
</dbReference>
<dbReference type="Proteomes" id="UP000000589">
    <property type="component" value="Chromosome 8"/>
</dbReference>
<dbReference type="RNAct" id="P84089">
    <property type="molecule type" value="protein"/>
</dbReference>
<dbReference type="Bgee" id="ENSMUSG00000021131">
    <property type="expression patterns" value="Expressed in epiblast cell in embryo and 189 other cell types or tissues"/>
</dbReference>
<dbReference type="ExpressionAtlas" id="P84089">
    <property type="expression patterns" value="baseline and differential"/>
</dbReference>
<dbReference type="GO" id="GO:0016020">
    <property type="term" value="C:membrane"/>
    <property type="evidence" value="ECO:0007005"/>
    <property type="project" value="UniProtKB"/>
</dbReference>
<dbReference type="GO" id="GO:0034709">
    <property type="term" value="C:methylosome"/>
    <property type="evidence" value="ECO:0000250"/>
    <property type="project" value="UniProtKB"/>
</dbReference>
<dbReference type="GO" id="GO:0005634">
    <property type="term" value="C:nucleus"/>
    <property type="evidence" value="ECO:0000266"/>
    <property type="project" value="UniProtKB"/>
</dbReference>
<dbReference type="GO" id="GO:0008327">
    <property type="term" value="F:methyl-CpG binding"/>
    <property type="evidence" value="ECO:0000250"/>
    <property type="project" value="UniProtKB"/>
</dbReference>
<dbReference type="GO" id="GO:0001649">
    <property type="term" value="P:osteoblast differentiation"/>
    <property type="evidence" value="ECO:0007005"/>
    <property type="project" value="UniProtKB"/>
</dbReference>
<dbReference type="FunFam" id="3.30.2260.10:FF:000001">
    <property type="entry name" value="Enhancer of rudimentary homolog"/>
    <property type="match status" value="1"/>
</dbReference>
<dbReference type="Gene3D" id="3.30.2260.10">
    <property type="entry name" value="Enhancer of rudimentary"/>
    <property type="match status" value="1"/>
</dbReference>
<dbReference type="InterPro" id="IPR035912">
    <property type="entry name" value="EHR_sf"/>
</dbReference>
<dbReference type="InterPro" id="IPR000781">
    <property type="entry name" value="ERH"/>
</dbReference>
<dbReference type="PANTHER" id="PTHR12373">
    <property type="entry name" value="ENHANCER OF RUDIMENTARY ERH"/>
    <property type="match status" value="1"/>
</dbReference>
<dbReference type="PANTHER" id="PTHR12373:SF0">
    <property type="entry name" value="ENHANCER OF RUDIMENTARY HOMOLOG"/>
    <property type="match status" value="1"/>
</dbReference>
<dbReference type="Pfam" id="PF01133">
    <property type="entry name" value="ER"/>
    <property type="match status" value="1"/>
</dbReference>
<dbReference type="PIRSF" id="PIRSF016393">
    <property type="entry name" value="Enh_rudimentary"/>
    <property type="match status" value="1"/>
</dbReference>
<dbReference type="SUPFAM" id="SSF143875">
    <property type="entry name" value="ERH-like"/>
    <property type="match status" value="1"/>
</dbReference>
<dbReference type="PROSITE" id="PS01290">
    <property type="entry name" value="ER"/>
    <property type="match status" value="1"/>
</dbReference>
<proteinExistence type="evidence at protein level"/>
<gene>
    <name type="primary">Erh</name>
</gene>
<keyword id="KW-0002">3D-structure</keyword>
<keyword id="KW-0007">Acetylation</keyword>
<keyword id="KW-0131">Cell cycle</keyword>
<keyword id="KW-1017">Isopeptide bond</keyword>
<keyword id="KW-0539">Nucleus</keyword>
<keyword id="KW-0597">Phosphoprotein</keyword>
<keyword id="KW-1185">Reference proteome</keyword>
<keyword id="KW-0832">Ubl conjugation</keyword>
<sequence>MSHTILLVQPTKRPEGRTYADYESVNECMEGVCKMYEEHLKRMNPNSPSITYDISQLFDFIDDLADLSCLVYRADTQTYQPYNKDWIKEKIYVLLRRQAQQAGK</sequence>
<comment type="function">
    <text>May have a role in the cell cycle.</text>
</comment>
<comment type="subunit">
    <text evidence="1 2">Homodimer (PubMed:15937287). Component of the methylosome, a 20S complex containing at least CLNS1A/pICln, PRMT5/SKB1, WDR77/MEP50, PRMT1 and ERH. Interacts with CHTOP (By similarity).</text>
</comment>
<comment type="subcellular location">
    <subcellularLocation>
        <location evidence="1">Nucleus</location>
    </subcellularLocation>
</comment>
<comment type="similarity">
    <text evidence="3">Belongs to the E(R) family.</text>
</comment>
<evidence type="ECO:0000250" key="1">
    <source>
        <dbReference type="UniProtKB" id="P84090"/>
    </source>
</evidence>
<evidence type="ECO:0000269" key="2">
    <source>
    </source>
</evidence>
<evidence type="ECO:0000305" key="3"/>
<evidence type="ECO:0007829" key="4">
    <source>
        <dbReference type="PDB" id="1WZ7"/>
    </source>
</evidence>
<organism>
    <name type="scientific">Mus musculus</name>
    <name type="common">Mouse</name>
    <dbReference type="NCBI Taxonomy" id="10090"/>
    <lineage>
        <taxon>Eukaryota</taxon>
        <taxon>Metazoa</taxon>
        <taxon>Chordata</taxon>
        <taxon>Craniata</taxon>
        <taxon>Vertebrata</taxon>
        <taxon>Euteleostomi</taxon>
        <taxon>Mammalia</taxon>
        <taxon>Eutheria</taxon>
        <taxon>Euarchontoglires</taxon>
        <taxon>Glires</taxon>
        <taxon>Rodentia</taxon>
        <taxon>Myomorpha</taxon>
        <taxon>Muroidea</taxon>
        <taxon>Muridae</taxon>
        <taxon>Murinae</taxon>
        <taxon>Mus</taxon>
        <taxon>Mus</taxon>
    </lineage>
</organism>
<accession>P84089</accession>
<accession>P70659</accession>
<accession>Q14259</accession>
<feature type="initiator methionine" description="Removed" evidence="1">
    <location>
        <position position="1"/>
    </location>
</feature>
<feature type="chain" id="PRO_0000219352" description="Enhancer of rudimentary homolog">
    <location>
        <begin position="2"/>
        <end position="104"/>
    </location>
</feature>
<feature type="modified residue" description="N-acetylserine" evidence="1">
    <location>
        <position position="2"/>
    </location>
</feature>
<feature type="modified residue" description="Phosphothreonine" evidence="1">
    <location>
        <position position="11"/>
    </location>
</feature>
<feature type="cross-link" description="Glycyl lysine isopeptide (Lys-Gly) (interchain with G-Cter in SUMO2)" evidence="1">
    <location>
        <position position="12"/>
    </location>
</feature>
<feature type="strand" evidence="4">
    <location>
        <begin position="4"/>
        <end position="9"/>
    </location>
</feature>
<feature type="strand" evidence="4">
    <location>
        <begin position="11"/>
        <end position="14"/>
    </location>
</feature>
<feature type="strand" evidence="4">
    <location>
        <begin position="18"/>
        <end position="24"/>
    </location>
</feature>
<feature type="helix" evidence="4">
    <location>
        <begin position="25"/>
        <end position="43"/>
    </location>
</feature>
<feature type="helix" evidence="4">
    <location>
        <begin position="54"/>
        <end position="63"/>
    </location>
</feature>
<feature type="strand" evidence="4">
    <location>
        <begin position="64"/>
        <end position="73"/>
    </location>
</feature>
<feature type="turn" evidence="4">
    <location>
        <begin position="74"/>
        <end position="77"/>
    </location>
</feature>
<feature type="strand" evidence="4">
    <location>
        <begin position="78"/>
        <end position="82"/>
    </location>
</feature>
<feature type="helix" evidence="4">
    <location>
        <begin position="84"/>
        <end position="96"/>
    </location>
</feature>
<feature type="turn" evidence="4">
    <location>
        <begin position="97"/>
        <end position="99"/>
    </location>
</feature>
<name>ERH_MOUSE</name>
<reference key="1">
    <citation type="journal article" date="1997" name="Gene">
        <title>The putative cell cycle gene, enhancer of rudimentary, encodes a highly conserved protein found in plants and animals.</title>
        <authorList>
            <person name="Gelsthorpe M."/>
            <person name="Pulumati M."/>
            <person name="McCallum C."/>
            <person name="Dang-Vu K."/>
            <person name="Tsubota S.I."/>
        </authorList>
    </citation>
    <scope>NUCLEOTIDE SEQUENCE [MRNA]</scope>
</reference>
<reference key="2">
    <citation type="journal article" date="1996" name="Biomed. Res.">
        <title>cDNA cloning of a novel mouse protein 'Mer', a homologue of enhancer of rudimentary gene of Drosophila melanogaster.</title>
        <authorList>
            <person name="Kuwano Y."/>
            <person name="Kawamura T."/>
            <person name="Sugahara S."/>
            <person name="Watanabe H."/>
            <person name="Ogata K."/>
            <person name="Abo T."/>
        </authorList>
    </citation>
    <scope>NUCLEOTIDE SEQUENCE [MRNA]</scope>
    <source>
        <strain>BALB/cJ</strain>
        <tissue>Thymus</tissue>
    </source>
</reference>
<reference key="3">
    <citation type="journal article" date="2005" name="Science">
        <title>The transcriptional landscape of the mammalian genome.</title>
        <authorList>
            <person name="Carninci P."/>
            <person name="Kasukawa T."/>
            <person name="Katayama S."/>
            <person name="Gough J."/>
            <person name="Frith M.C."/>
            <person name="Maeda N."/>
            <person name="Oyama R."/>
            <person name="Ravasi T."/>
            <person name="Lenhard B."/>
            <person name="Wells C."/>
            <person name="Kodzius R."/>
            <person name="Shimokawa K."/>
            <person name="Bajic V.B."/>
            <person name="Brenner S.E."/>
            <person name="Batalov S."/>
            <person name="Forrest A.R."/>
            <person name="Zavolan M."/>
            <person name="Davis M.J."/>
            <person name="Wilming L.G."/>
            <person name="Aidinis V."/>
            <person name="Allen J.E."/>
            <person name="Ambesi-Impiombato A."/>
            <person name="Apweiler R."/>
            <person name="Aturaliya R.N."/>
            <person name="Bailey T.L."/>
            <person name="Bansal M."/>
            <person name="Baxter L."/>
            <person name="Beisel K.W."/>
            <person name="Bersano T."/>
            <person name="Bono H."/>
            <person name="Chalk A.M."/>
            <person name="Chiu K.P."/>
            <person name="Choudhary V."/>
            <person name="Christoffels A."/>
            <person name="Clutterbuck D.R."/>
            <person name="Crowe M.L."/>
            <person name="Dalla E."/>
            <person name="Dalrymple B.P."/>
            <person name="de Bono B."/>
            <person name="Della Gatta G."/>
            <person name="di Bernardo D."/>
            <person name="Down T."/>
            <person name="Engstrom P."/>
            <person name="Fagiolini M."/>
            <person name="Faulkner G."/>
            <person name="Fletcher C.F."/>
            <person name="Fukushima T."/>
            <person name="Furuno M."/>
            <person name="Futaki S."/>
            <person name="Gariboldi M."/>
            <person name="Georgii-Hemming P."/>
            <person name="Gingeras T.R."/>
            <person name="Gojobori T."/>
            <person name="Green R.E."/>
            <person name="Gustincich S."/>
            <person name="Harbers M."/>
            <person name="Hayashi Y."/>
            <person name="Hensch T.K."/>
            <person name="Hirokawa N."/>
            <person name="Hill D."/>
            <person name="Huminiecki L."/>
            <person name="Iacono M."/>
            <person name="Ikeo K."/>
            <person name="Iwama A."/>
            <person name="Ishikawa T."/>
            <person name="Jakt M."/>
            <person name="Kanapin A."/>
            <person name="Katoh M."/>
            <person name="Kawasawa Y."/>
            <person name="Kelso J."/>
            <person name="Kitamura H."/>
            <person name="Kitano H."/>
            <person name="Kollias G."/>
            <person name="Krishnan S.P."/>
            <person name="Kruger A."/>
            <person name="Kummerfeld S.K."/>
            <person name="Kurochkin I.V."/>
            <person name="Lareau L.F."/>
            <person name="Lazarevic D."/>
            <person name="Lipovich L."/>
            <person name="Liu J."/>
            <person name="Liuni S."/>
            <person name="McWilliam S."/>
            <person name="Madan Babu M."/>
            <person name="Madera M."/>
            <person name="Marchionni L."/>
            <person name="Matsuda H."/>
            <person name="Matsuzawa S."/>
            <person name="Miki H."/>
            <person name="Mignone F."/>
            <person name="Miyake S."/>
            <person name="Morris K."/>
            <person name="Mottagui-Tabar S."/>
            <person name="Mulder N."/>
            <person name="Nakano N."/>
            <person name="Nakauchi H."/>
            <person name="Ng P."/>
            <person name="Nilsson R."/>
            <person name="Nishiguchi S."/>
            <person name="Nishikawa S."/>
            <person name="Nori F."/>
            <person name="Ohara O."/>
            <person name="Okazaki Y."/>
            <person name="Orlando V."/>
            <person name="Pang K.C."/>
            <person name="Pavan W.J."/>
            <person name="Pavesi G."/>
            <person name="Pesole G."/>
            <person name="Petrovsky N."/>
            <person name="Piazza S."/>
            <person name="Reed J."/>
            <person name="Reid J.F."/>
            <person name="Ring B.Z."/>
            <person name="Ringwald M."/>
            <person name="Rost B."/>
            <person name="Ruan Y."/>
            <person name="Salzberg S.L."/>
            <person name="Sandelin A."/>
            <person name="Schneider C."/>
            <person name="Schoenbach C."/>
            <person name="Sekiguchi K."/>
            <person name="Semple C.A."/>
            <person name="Seno S."/>
            <person name="Sessa L."/>
            <person name="Sheng Y."/>
            <person name="Shibata Y."/>
            <person name="Shimada H."/>
            <person name="Shimada K."/>
            <person name="Silva D."/>
            <person name="Sinclair B."/>
            <person name="Sperling S."/>
            <person name="Stupka E."/>
            <person name="Sugiura K."/>
            <person name="Sultana R."/>
            <person name="Takenaka Y."/>
            <person name="Taki K."/>
            <person name="Tammoja K."/>
            <person name="Tan S.L."/>
            <person name="Tang S."/>
            <person name="Taylor M.S."/>
            <person name="Tegner J."/>
            <person name="Teichmann S.A."/>
            <person name="Ueda H.R."/>
            <person name="van Nimwegen E."/>
            <person name="Verardo R."/>
            <person name="Wei C.L."/>
            <person name="Yagi K."/>
            <person name="Yamanishi H."/>
            <person name="Zabarovsky E."/>
            <person name="Zhu S."/>
            <person name="Zimmer A."/>
            <person name="Hide W."/>
            <person name="Bult C."/>
            <person name="Grimmond S.M."/>
            <person name="Teasdale R.D."/>
            <person name="Liu E.T."/>
            <person name="Brusic V."/>
            <person name="Quackenbush J."/>
            <person name="Wahlestedt C."/>
            <person name="Mattick J.S."/>
            <person name="Hume D.A."/>
            <person name="Kai C."/>
            <person name="Sasaki D."/>
            <person name="Tomaru Y."/>
            <person name="Fukuda S."/>
            <person name="Kanamori-Katayama M."/>
            <person name="Suzuki M."/>
            <person name="Aoki J."/>
            <person name="Arakawa T."/>
            <person name="Iida J."/>
            <person name="Imamura K."/>
            <person name="Itoh M."/>
            <person name="Kato T."/>
            <person name="Kawaji H."/>
            <person name="Kawagashira N."/>
            <person name="Kawashima T."/>
            <person name="Kojima M."/>
            <person name="Kondo S."/>
            <person name="Konno H."/>
            <person name="Nakano K."/>
            <person name="Ninomiya N."/>
            <person name="Nishio T."/>
            <person name="Okada M."/>
            <person name="Plessy C."/>
            <person name="Shibata K."/>
            <person name="Shiraki T."/>
            <person name="Suzuki S."/>
            <person name="Tagami M."/>
            <person name="Waki K."/>
            <person name="Watahiki A."/>
            <person name="Okamura-Oho Y."/>
            <person name="Suzuki H."/>
            <person name="Kawai J."/>
            <person name="Hayashizaki Y."/>
        </authorList>
    </citation>
    <scope>NUCLEOTIDE SEQUENCE [LARGE SCALE MRNA]</scope>
    <source>
        <strain>C57BL/6J</strain>
        <tissue>Brain cortex</tissue>
        <tissue>Embryonic stem cell</tissue>
    </source>
</reference>
<reference key="4">
    <citation type="journal article" date="2004" name="Genome Res.">
        <title>The status, quality, and expansion of the NIH full-length cDNA project: the Mammalian Gene Collection (MGC).</title>
        <authorList>
            <consortium name="The MGC Project Team"/>
        </authorList>
    </citation>
    <scope>NUCLEOTIDE SEQUENCE [LARGE SCALE MRNA]</scope>
    <source>
        <tissue>Bone</tissue>
        <tissue>Limb</tissue>
    </source>
</reference>
<reference key="5">
    <citation type="journal article" date="2010" name="Cell">
        <title>A tissue-specific atlas of mouse protein phosphorylation and expression.</title>
        <authorList>
            <person name="Huttlin E.L."/>
            <person name="Jedrychowski M.P."/>
            <person name="Elias J.E."/>
            <person name="Goswami T."/>
            <person name="Rad R."/>
            <person name="Beausoleil S.A."/>
            <person name="Villen J."/>
            <person name="Haas W."/>
            <person name="Sowa M.E."/>
            <person name="Gygi S.P."/>
        </authorList>
    </citation>
    <scope>IDENTIFICATION BY MASS SPECTROMETRY [LARGE SCALE ANALYSIS]</scope>
    <source>
        <tissue>Brain</tissue>
        <tissue>Kidney</tissue>
        <tissue>Liver</tissue>
        <tissue>Lung</tissue>
        <tissue>Pancreas</tissue>
        <tissue>Spleen</tissue>
        <tissue>Testis</tissue>
    </source>
</reference>
<reference key="6">
    <citation type="journal article" date="2005" name="J. Biomol. NMR">
        <title>Solution structure of the mouse enhancer of rudimentary protein reveals a novel fold.</title>
        <authorList>
            <person name="Li H."/>
            <person name="Inoue M."/>
            <person name="Yabuki T."/>
            <person name="Aoki M."/>
            <person name="Seki E."/>
            <person name="Matsuda T."/>
            <person name="Nunokawa E."/>
            <person name="Motoda Y."/>
            <person name="Kobayashi A."/>
            <person name="Terada T."/>
            <person name="Shirouzu M."/>
            <person name="Koshiba S."/>
            <person name="Lin Y.J."/>
            <person name="Guntert P."/>
            <person name="Suzuki H."/>
            <person name="Hayashizaki Y."/>
            <person name="Kigawa T."/>
            <person name="Yokoyama S."/>
        </authorList>
    </citation>
    <scope>STRUCTURE BY NMR</scope>
</reference>
<reference key="7">
    <citation type="journal article" date="2005" name="Protein Sci.">
        <title>Crystal structure of an enhancer of rudimentary homolog (ERH) at 2.1 Angstroms resolution.</title>
        <authorList>
            <person name="Arai R."/>
            <person name="Kukimoto-Niino M."/>
            <person name="Uda-Tochio H."/>
            <person name="Morita S."/>
            <person name="Uchikubo-Kamo T."/>
            <person name="Akasaka R."/>
            <person name="Etou Y."/>
            <person name="Hayashizaki Y."/>
            <person name="Kigawa T."/>
            <person name="Terada T."/>
            <person name="Shirouzu M."/>
            <person name="Yokoyama S."/>
        </authorList>
    </citation>
    <scope>X-RAY CRYSTALLOGRAPHY (2.1 ANGSTROMS)</scope>
    <scope>SUBUNIT</scope>
</reference>
<protein>
    <recommendedName>
        <fullName>Enhancer of rudimentary homolog</fullName>
        <shortName>Mer</shortName>
    </recommendedName>
</protein>